<organism>
    <name type="scientific">Clostridium botulinum (strain Okra / Type B1)</name>
    <dbReference type="NCBI Taxonomy" id="498213"/>
    <lineage>
        <taxon>Bacteria</taxon>
        <taxon>Bacillati</taxon>
        <taxon>Bacillota</taxon>
        <taxon>Clostridia</taxon>
        <taxon>Eubacteriales</taxon>
        <taxon>Clostridiaceae</taxon>
        <taxon>Clostridium</taxon>
    </lineage>
</organism>
<protein>
    <recommendedName>
        <fullName evidence="1">Putative membrane protein insertion efficiency factor</fullName>
    </recommendedName>
</protein>
<gene>
    <name type="ordered locus">CLD_0828</name>
</gene>
<reference key="1">
    <citation type="journal article" date="2007" name="PLoS ONE">
        <title>Analysis of the neurotoxin complex genes in Clostridium botulinum A1-A4 and B1 strains: BoNT/A3, /Ba4 and /B1 clusters are located within plasmids.</title>
        <authorList>
            <person name="Smith T.J."/>
            <person name="Hill K.K."/>
            <person name="Foley B.T."/>
            <person name="Detter J.C."/>
            <person name="Munk A.C."/>
            <person name="Bruce D.C."/>
            <person name="Doggett N.A."/>
            <person name="Smith L.A."/>
            <person name="Marks J.D."/>
            <person name="Xie G."/>
            <person name="Brettin T.S."/>
        </authorList>
    </citation>
    <scope>NUCLEOTIDE SEQUENCE [LARGE SCALE GENOMIC DNA]</scope>
    <source>
        <strain>Okra / Type B1</strain>
    </source>
</reference>
<name>YIDD_CLOBK</name>
<sequence length="69" mass="8030">MKNLLICIIKMYRKYISPLKRPSCRFYPTCSQYSLEAIEKYGALKGTLISIKRILKCHPFNKGGYDPVK</sequence>
<keyword id="KW-1003">Cell membrane</keyword>
<keyword id="KW-0472">Membrane</keyword>
<comment type="function">
    <text evidence="1">Could be involved in insertion of integral membrane proteins into the membrane.</text>
</comment>
<comment type="subcellular location">
    <subcellularLocation>
        <location evidence="1">Cell membrane</location>
        <topology evidence="1">Peripheral membrane protein</topology>
        <orientation evidence="1">Cytoplasmic side</orientation>
    </subcellularLocation>
</comment>
<comment type="similarity">
    <text evidence="1">Belongs to the UPF0161 family.</text>
</comment>
<evidence type="ECO:0000255" key="1">
    <source>
        <dbReference type="HAMAP-Rule" id="MF_00386"/>
    </source>
</evidence>
<feature type="chain" id="PRO_1000122629" description="Putative membrane protein insertion efficiency factor">
    <location>
        <begin position="1"/>
        <end position="69"/>
    </location>
</feature>
<dbReference type="EMBL" id="CP000939">
    <property type="protein sequence ID" value="ACA46754.1"/>
    <property type="molecule type" value="Genomic_DNA"/>
</dbReference>
<dbReference type="KEGG" id="cbb:CLD_0828"/>
<dbReference type="HOGENOM" id="CLU_144811_6_0_9"/>
<dbReference type="Proteomes" id="UP000008541">
    <property type="component" value="Chromosome"/>
</dbReference>
<dbReference type="GO" id="GO:0005886">
    <property type="term" value="C:plasma membrane"/>
    <property type="evidence" value="ECO:0007669"/>
    <property type="project" value="UniProtKB-SubCell"/>
</dbReference>
<dbReference type="HAMAP" id="MF_00386">
    <property type="entry name" value="UPF0161_YidD"/>
    <property type="match status" value="1"/>
</dbReference>
<dbReference type="InterPro" id="IPR002696">
    <property type="entry name" value="Membr_insert_effic_factor_YidD"/>
</dbReference>
<dbReference type="NCBIfam" id="TIGR00278">
    <property type="entry name" value="membrane protein insertion efficiency factor YidD"/>
    <property type="match status" value="1"/>
</dbReference>
<dbReference type="PANTHER" id="PTHR33383">
    <property type="entry name" value="MEMBRANE PROTEIN INSERTION EFFICIENCY FACTOR-RELATED"/>
    <property type="match status" value="1"/>
</dbReference>
<dbReference type="PANTHER" id="PTHR33383:SF1">
    <property type="entry name" value="MEMBRANE PROTEIN INSERTION EFFICIENCY FACTOR-RELATED"/>
    <property type="match status" value="1"/>
</dbReference>
<dbReference type="Pfam" id="PF01809">
    <property type="entry name" value="YidD"/>
    <property type="match status" value="1"/>
</dbReference>
<dbReference type="SMART" id="SM01234">
    <property type="entry name" value="Haemolytic"/>
    <property type="match status" value="1"/>
</dbReference>
<proteinExistence type="inferred from homology"/>
<accession>B1IHS2</accession>